<keyword id="KW-0456">Lyase</keyword>
<keyword id="KW-0479">Metal-binding</keyword>
<keyword id="KW-0533">Nickel</keyword>
<keyword id="KW-1185">Reference proteome</keyword>
<sequence length="135" mass="14920">MRLLHTMLRVGDLQRSIDFYTKVLGMKLLRTSENPEYKYSLAFVGYGPETEEAVIELTYNWGVDKYELGTAYGHIALSVDNAAEACEKIRQNGGNVTREAGPVKGGTTVIAFVEDPDGYKIELIEEKDAGRGLGN</sequence>
<reference key="1">
    <citation type="journal article" date="2002" name="Nucleic Acids Res.">
        <title>Genome sequence of Shigella flexneri 2a: insights into pathogenicity through comparison with genomes of Escherichia coli K12 and O157.</title>
        <authorList>
            <person name="Jin Q."/>
            <person name="Yuan Z."/>
            <person name="Xu J."/>
            <person name="Wang Y."/>
            <person name="Shen Y."/>
            <person name="Lu W."/>
            <person name="Wang J."/>
            <person name="Liu H."/>
            <person name="Yang J."/>
            <person name="Yang F."/>
            <person name="Zhang X."/>
            <person name="Zhang J."/>
            <person name="Yang G."/>
            <person name="Wu H."/>
            <person name="Qu D."/>
            <person name="Dong J."/>
            <person name="Sun L."/>
            <person name="Xue Y."/>
            <person name="Zhao A."/>
            <person name="Gao Y."/>
            <person name="Zhu J."/>
            <person name="Kan B."/>
            <person name="Ding K."/>
            <person name="Chen S."/>
            <person name="Cheng H."/>
            <person name="Yao Z."/>
            <person name="He B."/>
            <person name="Chen R."/>
            <person name="Ma D."/>
            <person name="Qiang B."/>
            <person name="Wen Y."/>
            <person name="Hou Y."/>
            <person name="Yu J."/>
        </authorList>
    </citation>
    <scope>NUCLEOTIDE SEQUENCE [LARGE SCALE GENOMIC DNA]</scope>
    <source>
        <strain>301 / Serotype 2a</strain>
    </source>
</reference>
<reference key="2">
    <citation type="journal article" date="2003" name="Infect. Immun.">
        <title>Complete genome sequence and comparative genomics of Shigella flexneri serotype 2a strain 2457T.</title>
        <authorList>
            <person name="Wei J."/>
            <person name="Goldberg M.B."/>
            <person name="Burland V."/>
            <person name="Venkatesan M.M."/>
            <person name="Deng W."/>
            <person name="Fournier G."/>
            <person name="Mayhew G.F."/>
            <person name="Plunkett G. III"/>
            <person name="Rose D.J."/>
            <person name="Darling A."/>
            <person name="Mau B."/>
            <person name="Perna N.T."/>
            <person name="Payne S.M."/>
            <person name="Runyen-Janecky L.J."/>
            <person name="Zhou S."/>
            <person name="Schwartz D.C."/>
            <person name="Blattner F.R."/>
        </authorList>
    </citation>
    <scope>NUCLEOTIDE SEQUENCE [LARGE SCALE GENOMIC DNA]</scope>
    <source>
        <strain>ATCC 700930 / 2457T / Serotype 2a</strain>
    </source>
</reference>
<name>LGUL_SHIFL</name>
<protein>
    <recommendedName>
        <fullName>Lactoylglutathione lyase</fullName>
        <ecNumber>4.4.1.5</ecNumber>
    </recommendedName>
    <alternativeName>
        <fullName>Aldoketomutase</fullName>
    </alternativeName>
    <alternativeName>
        <fullName>Glyoxalase I</fullName>
        <shortName>Glx I</shortName>
    </alternativeName>
    <alternativeName>
        <fullName>Ketone-aldehyde mutase</fullName>
    </alternativeName>
    <alternativeName>
        <fullName>Methylglyoxalase</fullName>
    </alternativeName>
    <alternativeName>
        <fullName>S-D-lactoylglutathione methylglyoxal lyase</fullName>
    </alternativeName>
</protein>
<proteinExistence type="inferred from homology"/>
<gene>
    <name type="primary">gloA</name>
    <name type="ordered locus">SF1678</name>
    <name type="ordered locus">S1810</name>
</gene>
<accession>P0AC83</accession>
<accession>P77036</accession>
<accession>Q59384</accession>
<organism>
    <name type="scientific">Shigella flexneri</name>
    <dbReference type="NCBI Taxonomy" id="623"/>
    <lineage>
        <taxon>Bacteria</taxon>
        <taxon>Pseudomonadati</taxon>
        <taxon>Pseudomonadota</taxon>
        <taxon>Gammaproteobacteria</taxon>
        <taxon>Enterobacterales</taxon>
        <taxon>Enterobacteriaceae</taxon>
        <taxon>Shigella</taxon>
    </lineage>
</organism>
<comment type="function">
    <text evidence="1">Catalyzes the conversion of hemimercaptal, formed from methylglyoxal and glutathione, to S-lactoylglutathione.</text>
</comment>
<comment type="catalytic activity">
    <reaction>
        <text>(R)-S-lactoylglutathione = methylglyoxal + glutathione</text>
        <dbReference type="Rhea" id="RHEA:19069"/>
        <dbReference type="ChEBI" id="CHEBI:17158"/>
        <dbReference type="ChEBI" id="CHEBI:57474"/>
        <dbReference type="ChEBI" id="CHEBI:57925"/>
        <dbReference type="EC" id="4.4.1.5"/>
    </reaction>
</comment>
<comment type="cofactor">
    <cofactor evidence="1">
        <name>Ni(2+)</name>
        <dbReference type="ChEBI" id="CHEBI:49786"/>
    </cofactor>
    <text evidence="1">Binds 1 nickel ion per subunit. In the homodimer, two nickel ions are bound between subunits.</text>
</comment>
<comment type="pathway">
    <text>Secondary metabolite metabolism; methylglyoxal degradation; (R)-lactate from methylglyoxal: step 1/2.</text>
</comment>
<comment type="subunit">
    <text evidence="1">Homodimer.</text>
</comment>
<comment type="similarity">
    <text evidence="3">Belongs to the glyoxalase I family.</text>
</comment>
<feature type="chain" id="PRO_0000168092" description="Lactoylglutathione lyase">
    <location>
        <begin position="1"/>
        <end position="135"/>
    </location>
</feature>
<feature type="domain" description="VOC" evidence="2">
    <location>
        <begin position="2"/>
        <end position="126"/>
    </location>
</feature>
<feature type="active site" description="Proton donor/acceptor" evidence="1">
    <location>
        <position position="122"/>
    </location>
</feature>
<feature type="binding site" evidence="1">
    <location>
        <position position="5"/>
    </location>
    <ligand>
        <name>Ni(2+)</name>
        <dbReference type="ChEBI" id="CHEBI:49786"/>
        <note>ligand shared between dimeric partners</note>
    </ligand>
</feature>
<feature type="binding site" evidence="1">
    <location>
        <position position="9"/>
    </location>
    <ligand>
        <name>substrate</name>
        <note>ligand shared between dimeric partners</note>
    </ligand>
</feature>
<feature type="binding site" evidence="1">
    <location>
        <position position="56"/>
    </location>
    <ligand>
        <name>Ni(2+)</name>
        <dbReference type="ChEBI" id="CHEBI:49786"/>
        <note>ligand shared between dimeric partners</note>
    </ligand>
</feature>
<feature type="binding site" evidence="1">
    <location>
        <position position="60"/>
    </location>
    <ligand>
        <name>substrate</name>
        <note>ligand shared between dimeric partners</note>
    </ligand>
</feature>
<feature type="binding site" description="in other chain" evidence="1">
    <location>
        <position position="74"/>
    </location>
    <ligand>
        <name>Ni(2+)</name>
        <dbReference type="ChEBI" id="CHEBI:49786"/>
        <note>ligand shared between dimeric partners</note>
    </ligand>
</feature>
<feature type="binding site" description="in other chain" evidence="1">
    <location>
        <position position="74"/>
    </location>
    <ligand>
        <name>substrate</name>
        <note>ligand shared between dimeric partners</note>
    </ligand>
</feature>
<feature type="binding site" description="in other chain" evidence="1">
    <location>
        <position position="122"/>
    </location>
    <ligand>
        <name>Ni(2+)</name>
        <dbReference type="ChEBI" id="CHEBI:49786"/>
        <note>ligand shared between dimeric partners</note>
    </ligand>
</feature>
<dbReference type="EC" id="4.4.1.5"/>
<dbReference type="EMBL" id="AE005674">
    <property type="protein sequence ID" value="AAN43259.1"/>
    <property type="molecule type" value="Genomic_DNA"/>
</dbReference>
<dbReference type="EMBL" id="AE014073">
    <property type="protein sequence ID" value="AAP17147.1"/>
    <property type="molecule type" value="Genomic_DNA"/>
</dbReference>
<dbReference type="RefSeq" id="NP_707552.1">
    <property type="nucleotide sequence ID" value="NC_004337.2"/>
</dbReference>
<dbReference type="RefSeq" id="WP_001237796.1">
    <property type="nucleotide sequence ID" value="NZ_WPGW01000025.1"/>
</dbReference>
<dbReference type="SMR" id="P0AC83"/>
<dbReference type="STRING" id="198214.SF1678"/>
<dbReference type="PaxDb" id="198214-SF1678"/>
<dbReference type="GeneID" id="1024857"/>
<dbReference type="GeneID" id="93775805"/>
<dbReference type="KEGG" id="sfl:SF1678"/>
<dbReference type="KEGG" id="sfx:S1810"/>
<dbReference type="PATRIC" id="fig|198214.7.peg.1977"/>
<dbReference type="HOGENOM" id="CLU_046006_8_1_6"/>
<dbReference type="UniPathway" id="UPA00619">
    <property type="reaction ID" value="UER00675"/>
</dbReference>
<dbReference type="Proteomes" id="UP000001006">
    <property type="component" value="Chromosome"/>
</dbReference>
<dbReference type="Proteomes" id="UP000002673">
    <property type="component" value="Chromosome"/>
</dbReference>
<dbReference type="GO" id="GO:0005737">
    <property type="term" value="C:cytoplasm"/>
    <property type="evidence" value="ECO:0007669"/>
    <property type="project" value="TreeGrafter"/>
</dbReference>
<dbReference type="GO" id="GO:0004462">
    <property type="term" value="F:lactoylglutathione lyase activity"/>
    <property type="evidence" value="ECO:0007669"/>
    <property type="project" value="UniProtKB-EC"/>
</dbReference>
<dbReference type="GO" id="GO:0046872">
    <property type="term" value="F:metal ion binding"/>
    <property type="evidence" value="ECO:0007669"/>
    <property type="project" value="UniProtKB-KW"/>
</dbReference>
<dbReference type="GO" id="GO:0019243">
    <property type="term" value="P:methylglyoxal catabolic process to D-lactate via S-lactoyl-glutathione"/>
    <property type="evidence" value="ECO:0007669"/>
    <property type="project" value="TreeGrafter"/>
</dbReference>
<dbReference type="CDD" id="cd16358">
    <property type="entry name" value="GlxI_Ni"/>
    <property type="match status" value="1"/>
</dbReference>
<dbReference type="FunFam" id="3.10.180.10:FF:000002">
    <property type="entry name" value="Lactoylglutathione lyase"/>
    <property type="match status" value="1"/>
</dbReference>
<dbReference type="Gene3D" id="3.10.180.10">
    <property type="entry name" value="2,3-Dihydroxybiphenyl 1,2-Dioxygenase, domain 1"/>
    <property type="match status" value="1"/>
</dbReference>
<dbReference type="InterPro" id="IPR029068">
    <property type="entry name" value="Glyas_Bleomycin-R_OHBP_Dase"/>
</dbReference>
<dbReference type="InterPro" id="IPR004360">
    <property type="entry name" value="Glyas_Fos-R_dOase_dom"/>
</dbReference>
<dbReference type="InterPro" id="IPR004361">
    <property type="entry name" value="Glyoxalase_1"/>
</dbReference>
<dbReference type="InterPro" id="IPR018146">
    <property type="entry name" value="Glyoxalase_1_CS"/>
</dbReference>
<dbReference type="InterPro" id="IPR037523">
    <property type="entry name" value="VOC"/>
</dbReference>
<dbReference type="NCBIfam" id="TIGR00068">
    <property type="entry name" value="glyox_I"/>
    <property type="match status" value="1"/>
</dbReference>
<dbReference type="NCBIfam" id="NF007629">
    <property type="entry name" value="PRK10291.1"/>
    <property type="match status" value="1"/>
</dbReference>
<dbReference type="PANTHER" id="PTHR46036">
    <property type="entry name" value="LACTOYLGLUTATHIONE LYASE"/>
    <property type="match status" value="1"/>
</dbReference>
<dbReference type="PANTHER" id="PTHR46036:SF5">
    <property type="entry name" value="LACTOYLGLUTATHIONE LYASE"/>
    <property type="match status" value="1"/>
</dbReference>
<dbReference type="Pfam" id="PF00903">
    <property type="entry name" value="Glyoxalase"/>
    <property type="match status" value="1"/>
</dbReference>
<dbReference type="SUPFAM" id="SSF54593">
    <property type="entry name" value="Glyoxalase/Bleomycin resistance protein/Dihydroxybiphenyl dioxygenase"/>
    <property type="match status" value="1"/>
</dbReference>
<dbReference type="PROSITE" id="PS00934">
    <property type="entry name" value="GLYOXALASE_I_1"/>
    <property type="match status" value="1"/>
</dbReference>
<dbReference type="PROSITE" id="PS00935">
    <property type="entry name" value="GLYOXALASE_I_2"/>
    <property type="match status" value="1"/>
</dbReference>
<dbReference type="PROSITE" id="PS51819">
    <property type="entry name" value="VOC"/>
    <property type="match status" value="1"/>
</dbReference>
<evidence type="ECO:0000250" key="1"/>
<evidence type="ECO:0000255" key="2">
    <source>
        <dbReference type="PROSITE-ProRule" id="PRU01163"/>
    </source>
</evidence>
<evidence type="ECO:0000305" key="3"/>